<name>HS2ST_MOUSE</name>
<gene>
    <name evidence="14" type="primary">Hs2st1</name>
    <name type="synonym">Hs2st</name>
</gene>
<feature type="chain" id="PRO_0000207675" description="Heparan sulfate 2-O-sulfotransferase 1">
    <location>
        <begin position="1"/>
        <end position="356"/>
    </location>
</feature>
<feature type="topological domain" description="Cytoplasmic" evidence="4">
    <location>
        <begin position="1"/>
        <end position="11"/>
    </location>
</feature>
<feature type="transmembrane region" description="Helical; Signal-anchor for type II membrane protein" evidence="4">
    <location>
        <begin position="12"/>
        <end position="28"/>
    </location>
</feature>
<feature type="topological domain" description="Lumenal" evidence="4">
    <location>
        <begin position="29"/>
        <end position="356"/>
    </location>
</feature>
<feature type="coiled-coil region" evidence="4">
    <location>
        <begin position="24"/>
        <end position="51"/>
    </location>
</feature>
<feature type="active site" evidence="3">
    <location>
        <position position="140"/>
    </location>
</feature>
<feature type="active site" evidence="1">
    <location>
        <position position="142"/>
    </location>
</feature>
<feature type="binding site" evidence="3">
    <location>
        <position position="83"/>
    </location>
    <ligand>
        <name>adenosine 3',5'-bisphosphate</name>
        <dbReference type="ChEBI" id="CHEBI:58343"/>
    </ligand>
</feature>
<feature type="binding site" evidence="3">
    <location>
        <position position="84"/>
    </location>
    <ligand>
        <name>adenosine 3',5'-bisphosphate</name>
        <dbReference type="ChEBI" id="CHEBI:58343"/>
    </ligand>
</feature>
<feature type="binding site" evidence="3">
    <location>
        <position position="85"/>
    </location>
    <ligand>
        <name>adenosine 3',5'-bisphosphate</name>
        <dbReference type="ChEBI" id="CHEBI:58343"/>
    </ligand>
</feature>
<feature type="binding site" evidence="3">
    <location>
        <position position="86"/>
    </location>
    <ligand>
        <name>adenosine 3',5'-bisphosphate</name>
        <dbReference type="ChEBI" id="CHEBI:58343"/>
    </ligand>
</feature>
<feature type="binding site" evidence="3">
    <location>
        <position position="87"/>
    </location>
    <ligand>
        <name>adenosine 3',5'-bisphosphate</name>
        <dbReference type="ChEBI" id="CHEBI:58343"/>
    </ligand>
</feature>
<feature type="binding site" evidence="3">
    <location>
        <position position="88"/>
    </location>
    <ligand>
        <name>adenosine 3',5'-bisphosphate</name>
        <dbReference type="ChEBI" id="CHEBI:58343"/>
    </ligand>
</feature>
<feature type="binding site" evidence="3">
    <location>
        <position position="164"/>
    </location>
    <ligand>
        <name>adenosine 3',5'-bisphosphate</name>
        <dbReference type="ChEBI" id="CHEBI:58343"/>
    </ligand>
</feature>
<feature type="binding site" evidence="3">
    <location>
        <position position="172"/>
    </location>
    <ligand>
        <name>adenosine 3',5'-bisphosphate</name>
        <dbReference type="ChEBI" id="CHEBI:58343"/>
    </ligand>
</feature>
<feature type="binding site" evidence="3">
    <location>
        <position position="279"/>
    </location>
    <ligand>
        <name>adenosine 3',5'-bisphosphate</name>
        <dbReference type="ChEBI" id="CHEBI:58343"/>
    </ligand>
</feature>
<feature type="binding site" evidence="3">
    <location>
        <position position="285"/>
    </location>
    <ligand>
        <name>adenosine 3',5'-bisphosphate</name>
        <dbReference type="ChEBI" id="CHEBI:58343"/>
    </ligand>
</feature>
<feature type="binding site" evidence="3">
    <location>
        <position position="290"/>
    </location>
    <ligand>
        <name>adenosine 3',5'-bisphosphate</name>
        <dbReference type="ChEBI" id="CHEBI:58343"/>
    </ligand>
</feature>
<feature type="binding site" evidence="3">
    <location>
        <position position="293"/>
    </location>
    <ligand>
        <name>adenosine 3',5'-bisphosphate</name>
        <dbReference type="ChEBI" id="CHEBI:58343"/>
    </ligand>
</feature>
<feature type="glycosylation site" description="N-linked (GlcNAc...) asparagine" evidence="4">
    <location>
        <position position="108"/>
    </location>
</feature>
<feature type="glycosylation site" description="N-linked (GlcNAc...) asparagine" evidence="4">
    <location>
        <position position="127"/>
    </location>
</feature>
<feature type="disulfide bond" evidence="3">
    <location>
        <begin position="201"/>
        <end position="209"/>
    </location>
</feature>
<feature type="disulfide bond" evidence="3">
    <location>
        <begin position="222"/>
        <end position="228"/>
    </location>
</feature>
<feature type="sequence conflict" description="In Ref. 1; AAC40135." evidence="13" ref="1">
    <original>F</original>
    <variation>V</variation>
    <location>
        <position position="271"/>
    </location>
</feature>
<feature type="sequence conflict" description="In Ref. 4; AAH25443." evidence="13" ref="4">
    <original>R</original>
    <variation>H</variation>
    <location>
        <position position="333"/>
    </location>
</feature>
<proteinExistence type="evidence at protein level"/>
<comment type="function">
    <text evidence="6 7 9">Catalyzes the transfer of a sulfo group from 3'-phospho-5'-adenylyl sulfate (PAPS) to the 2-OH position of iduronic acid (IdoA) or glucuronic acid (GlcA) within the heparan sulfate (HS) chain and participates in HS biosynthesis (PubMed:11331020, PubMed:11457822). Required for metanephric development of kidney formation, suggesting that 2-O-sulfation within HS is essential for signaling between ureteric bud and metanephric mesenchyme (PubMed:9637690).</text>
</comment>
<comment type="biophysicochemical properties">
    <kinetics>
        <KM evidence="6">3.7 uM for iduronic acid-containing substrate disaccharide units</KM>
        <KM evidence="6">19.3 uM for glucuronic acid-containing substrate disaccharide units</KM>
    </kinetics>
</comment>
<comment type="subunit">
    <text evidence="3 8">Homotrimer (By similarity). Interacts with the C5-epimerase GLCE (PubMed:11687650).</text>
</comment>
<comment type="subcellular location">
    <subcellularLocation>
        <location evidence="8">Golgi apparatus membrane</location>
        <topology evidence="8">Single-pass type II membrane protein</topology>
    </subcellularLocation>
</comment>
<comment type="tissue specificity">
    <text evidence="6 9">Widely expressed. Expressed at higher level in lung and brain. Weakly expressed in spleen.</text>
</comment>
<comment type="developmental stage">
    <text>At 7.5 dpc, it is expressed in all three germ layers, although it appears to be more expressed in the embryonic ectoderm and the node. Widespread expression persists at 8.5 dpc, although it is clearly expressed at higher level in rhombomeres 2 and 4 and branchial arches 1 and 2 (which are populated by neural crest from these rhombomeres). At 10.5 dpc, the dorsal and ventral aspects of the neural tube, brain and midbrain-hindbrain junction show the most intense expression. A day later in development, elevated expression is found in the floor plate and the sclerotome. At 12.5 dpc, both the floor plate and the roofplate exhibit strong expression as the mesenchyme of the limb and of the developing whisker follicles. At 13.5 dpc, it is predominantly expressed in embryonic mesenchyme, especially at sites of epithelial-mesenchymal interactions such as the developing teeth and whisker follicles. Strong expression is also apparent in the perichondria of the cartilaginous skeleton, an important site for the regulation of skeletal differentiation.</text>
</comment>
<comment type="PTM">
    <text evidence="2">N-glycosylated.</text>
</comment>
<comment type="disruption phenotype">
    <text evidence="9">Mice die in the neonatal period, exhibiting bilateral renal agenesis and defects of the eye and the skeleton. Uronate 2-O-sulfates are not detected in such mice, however, the domain structure of the HS is conserved, due to a compensatory increase in N- and 6-O-sulfation maintain the overall charge density.</text>
</comment>
<comment type="similarity">
    <text evidence="13">Belongs to the sulfotransferase 3 family.</text>
</comment>
<evidence type="ECO:0000250" key="1">
    <source>
        <dbReference type="UniProtKB" id="A0A8C2LVE3"/>
    </source>
</evidence>
<evidence type="ECO:0000250" key="2">
    <source>
        <dbReference type="UniProtKB" id="O08889"/>
    </source>
</evidence>
<evidence type="ECO:0000250" key="3">
    <source>
        <dbReference type="UniProtKB" id="Q76KB1"/>
    </source>
</evidence>
<evidence type="ECO:0000255" key="4"/>
<evidence type="ECO:0000269" key="5">
    <source>
    </source>
</evidence>
<evidence type="ECO:0000269" key="6">
    <source>
    </source>
</evidence>
<evidence type="ECO:0000269" key="7">
    <source>
    </source>
</evidence>
<evidence type="ECO:0000269" key="8">
    <source>
    </source>
</evidence>
<evidence type="ECO:0000269" key="9">
    <source>
    </source>
</evidence>
<evidence type="ECO:0000303" key="10">
    <source>
    </source>
</evidence>
<evidence type="ECO:0000303" key="11">
    <source>
    </source>
</evidence>
<evidence type="ECO:0000303" key="12">
    <source>
    </source>
</evidence>
<evidence type="ECO:0000305" key="13"/>
<evidence type="ECO:0000312" key="14">
    <source>
        <dbReference type="MGI" id="MGI:1346049"/>
    </source>
</evidence>
<evidence type="ECO:0000312" key="15">
    <source>
        <dbReference type="Proteomes" id="UP000000589"/>
    </source>
</evidence>
<dbReference type="EC" id="2.8.2.-" evidence="5"/>
<dbReference type="EMBL" id="AF060178">
    <property type="protein sequence ID" value="AAC40135.1"/>
    <property type="molecule type" value="mRNA"/>
</dbReference>
<dbReference type="EMBL" id="AF169243">
    <property type="protein sequence ID" value="AAF59900.1"/>
    <property type="molecule type" value="mRNA"/>
</dbReference>
<dbReference type="EMBL" id="AK088698">
    <property type="protein sequence ID" value="BAC40511.1"/>
    <property type="molecule type" value="mRNA"/>
</dbReference>
<dbReference type="EMBL" id="AK165112">
    <property type="protein sequence ID" value="BAE38041.1"/>
    <property type="molecule type" value="mRNA"/>
</dbReference>
<dbReference type="EMBL" id="BC025443">
    <property type="protein sequence ID" value="AAH25443.1"/>
    <property type="molecule type" value="mRNA"/>
</dbReference>
<dbReference type="EMBL" id="BC059008">
    <property type="protein sequence ID" value="AAH59008.1"/>
    <property type="molecule type" value="mRNA"/>
</dbReference>
<dbReference type="CCDS" id="CCDS17883.1"/>
<dbReference type="RefSeq" id="NP_035958.3">
    <property type="nucleotide sequence ID" value="NM_011828.3"/>
</dbReference>
<dbReference type="SMR" id="Q8R3H7"/>
<dbReference type="FunCoup" id="Q8R3H7">
    <property type="interactions" value="2964"/>
</dbReference>
<dbReference type="STRING" id="10090.ENSMUSP00000043066"/>
<dbReference type="GlyConnect" id="2370">
    <property type="glycosylation" value="3 N-Linked glycans (2 sites)"/>
</dbReference>
<dbReference type="GlyCosmos" id="Q8R3H7">
    <property type="glycosylation" value="2 sites, 3 glycans"/>
</dbReference>
<dbReference type="GlyGen" id="Q8R3H7">
    <property type="glycosylation" value="2 sites, 4 N-linked glycans (2 sites)"/>
</dbReference>
<dbReference type="iPTMnet" id="Q8R3H7"/>
<dbReference type="PhosphoSitePlus" id="Q8R3H7"/>
<dbReference type="PaxDb" id="10090-ENSMUSP00000043066"/>
<dbReference type="PeptideAtlas" id="Q8R3H7"/>
<dbReference type="ProteomicsDB" id="273318"/>
<dbReference type="Pumba" id="Q8R3H7"/>
<dbReference type="DNASU" id="23908"/>
<dbReference type="Ensembl" id="ENSMUST00000043325.9">
    <property type="protein sequence ID" value="ENSMUSP00000043066.8"/>
    <property type="gene ID" value="ENSMUSG00000040151.10"/>
</dbReference>
<dbReference type="GeneID" id="23908"/>
<dbReference type="KEGG" id="mmu:23908"/>
<dbReference type="UCSC" id="uc012cyx.1">
    <property type="organism name" value="mouse"/>
</dbReference>
<dbReference type="AGR" id="MGI:1346049"/>
<dbReference type="CTD" id="9653"/>
<dbReference type="MGI" id="MGI:1346049">
    <property type="gene designation" value="Hs2st1"/>
</dbReference>
<dbReference type="VEuPathDB" id="HostDB:ENSMUSG00000040151"/>
<dbReference type="eggNOG" id="KOG3922">
    <property type="taxonomic scope" value="Eukaryota"/>
</dbReference>
<dbReference type="GeneTree" id="ENSGT00530000063408"/>
<dbReference type="HOGENOM" id="CLU_045310_1_0_1"/>
<dbReference type="InParanoid" id="Q8R3H7"/>
<dbReference type="OMA" id="PNQIQFV"/>
<dbReference type="OrthoDB" id="10019582at2759"/>
<dbReference type="PhylomeDB" id="Q8R3H7"/>
<dbReference type="TreeFam" id="TF315238"/>
<dbReference type="Reactome" id="R-MMU-2022928">
    <property type="pathway name" value="HS-GAG biosynthesis"/>
</dbReference>
<dbReference type="SABIO-RK" id="Q8R3H7"/>
<dbReference type="BioGRID-ORCS" id="23908">
    <property type="hits" value="3 hits in 78 CRISPR screens"/>
</dbReference>
<dbReference type="ChiTaRS" id="Hs2st1">
    <property type="organism name" value="mouse"/>
</dbReference>
<dbReference type="PRO" id="PR:Q8R3H7"/>
<dbReference type="Proteomes" id="UP000000589">
    <property type="component" value="Chromosome 3"/>
</dbReference>
<dbReference type="RNAct" id="Q8R3H7">
    <property type="molecule type" value="protein"/>
</dbReference>
<dbReference type="Bgee" id="ENSMUSG00000040151">
    <property type="expression patterns" value="Expressed in right lung and 250 other cell types or tissues"/>
</dbReference>
<dbReference type="ExpressionAtlas" id="Q8R3H7">
    <property type="expression patterns" value="baseline and differential"/>
</dbReference>
<dbReference type="GO" id="GO:0005794">
    <property type="term" value="C:Golgi apparatus"/>
    <property type="evidence" value="ECO:0000314"/>
    <property type="project" value="MGI"/>
</dbReference>
<dbReference type="GO" id="GO:0000139">
    <property type="term" value="C:Golgi membrane"/>
    <property type="evidence" value="ECO:0007669"/>
    <property type="project" value="UniProtKB-SubCell"/>
</dbReference>
<dbReference type="GO" id="GO:0004394">
    <property type="term" value="F:heparan sulfate 2-sulfotransferase activity"/>
    <property type="evidence" value="ECO:0000314"/>
    <property type="project" value="MGI"/>
</dbReference>
<dbReference type="GO" id="GO:0010467">
    <property type="term" value="P:gene expression"/>
    <property type="evidence" value="ECO:0000315"/>
    <property type="project" value="MGI"/>
</dbReference>
<dbReference type="GO" id="GO:0015012">
    <property type="term" value="P:heparan sulfate proteoglycan biosynthetic process"/>
    <property type="evidence" value="ECO:0000315"/>
    <property type="project" value="MGI"/>
</dbReference>
<dbReference type="GO" id="GO:0030202">
    <property type="term" value="P:heparin proteoglycan metabolic process"/>
    <property type="evidence" value="ECO:0000315"/>
    <property type="project" value="MGI"/>
</dbReference>
<dbReference type="GO" id="GO:0060676">
    <property type="term" value="P:ureteric bud formation"/>
    <property type="evidence" value="ECO:0000315"/>
    <property type="project" value="MGI"/>
</dbReference>
<dbReference type="FunFam" id="3.40.50.300:FF:000534">
    <property type="entry name" value="Heparan sulfate 2-O-sulfotransferase 1"/>
    <property type="match status" value="1"/>
</dbReference>
<dbReference type="Gene3D" id="3.40.50.300">
    <property type="entry name" value="P-loop containing nucleotide triphosphate hydrolases"/>
    <property type="match status" value="1"/>
</dbReference>
<dbReference type="InterPro" id="IPR007734">
    <property type="entry name" value="Heparan_SO4_2-O-STrfase"/>
</dbReference>
<dbReference type="InterPro" id="IPR027417">
    <property type="entry name" value="P-loop_NTPase"/>
</dbReference>
<dbReference type="InterPro" id="IPR005331">
    <property type="entry name" value="Sulfotransferase"/>
</dbReference>
<dbReference type="PANTHER" id="PTHR12129">
    <property type="entry name" value="HEPARAN SULFATE 2-O-SULFOTRANSFERASE"/>
    <property type="match status" value="1"/>
</dbReference>
<dbReference type="PANTHER" id="PTHR12129:SF17">
    <property type="entry name" value="HEPARAN SULFATE 2-O-SULFOTRANSFERASE 1"/>
    <property type="match status" value="1"/>
</dbReference>
<dbReference type="Pfam" id="PF03567">
    <property type="entry name" value="Sulfotransfer_2"/>
    <property type="match status" value="1"/>
</dbReference>
<dbReference type="SUPFAM" id="SSF52540">
    <property type="entry name" value="P-loop containing nucleoside triphosphate hydrolases"/>
    <property type="match status" value="1"/>
</dbReference>
<keyword id="KW-0175">Coiled coil</keyword>
<keyword id="KW-1015">Disulfide bond</keyword>
<keyword id="KW-0325">Glycoprotein</keyword>
<keyword id="KW-0333">Golgi apparatus</keyword>
<keyword id="KW-0472">Membrane</keyword>
<keyword id="KW-1185">Reference proteome</keyword>
<keyword id="KW-0735">Signal-anchor</keyword>
<keyword id="KW-0808">Transferase</keyword>
<keyword id="KW-0812">Transmembrane</keyword>
<keyword id="KW-1133">Transmembrane helix</keyword>
<reference key="1">
    <citation type="journal article" date="1998" name="Genes Dev.">
        <title>Renal agenesis in mice homozygous for a gene trap mutation in the gene encoding heparan sulfate 2-sulfotransferase.</title>
        <authorList>
            <person name="Bullock S.L."/>
            <person name="Fletcher J.M."/>
            <person name="Beddington R.S.P."/>
            <person name="Wilson V.A."/>
        </authorList>
    </citation>
    <scope>NUCLEOTIDE SEQUENCE [MRNA]</scope>
    <scope>FUNCTION</scope>
    <scope>DISRUPTION PHENOTYPE</scope>
    <scope>TISSUE SPECIFICITY</scope>
    <source>
        <strain>C57BL/6J</strain>
    </source>
</reference>
<reference key="2">
    <citation type="journal article" date="2000" name="Biochem. J.">
        <title>Expression of heparan sulphate L-iduronyl 2-O-sulphotransferase in human kidney 293 cells results in increased D-glucuronyl 2-O-sulphation.</title>
        <authorList>
            <person name="Rong J."/>
            <person name="Habuchi H."/>
            <person name="Kimata K."/>
            <person name="Lindahl U."/>
            <person name="Kusche-Gullberg M."/>
        </authorList>
    </citation>
    <scope>NUCLEOTIDE SEQUENCE [MRNA]</scope>
    <scope>FUNCTION</scope>
    <scope>CATALYTIC ACTIVITY</scope>
    <source>
        <tissue>Mast cell</tissue>
    </source>
</reference>
<reference key="3">
    <citation type="journal article" date="2005" name="Science">
        <title>The transcriptional landscape of the mammalian genome.</title>
        <authorList>
            <person name="Carninci P."/>
            <person name="Kasukawa T."/>
            <person name="Katayama S."/>
            <person name="Gough J."/>
            <person name="Frith M.C."/>
            <person name="Maeda N."/>
            <person name="Oyama R."/>
            <person name="Ravasi T."/>
            <person name="Lenhard B."/>
            <person name="Wells C."/>
            <person name="Kodzius R."/>
            <person name="Shimokawa K."/>
            <person name="Bajic V.B."/>
            <person name="Brenner S.E."/>
            <person name="Batalov S."/>
            <person name="Forrest A.R."/>
            <person name="Zavolan M."/>
            <person name="Davis M.J."/>
            <person name="Wilming L.G."/>
            <person name="Aidinis V."/>
            <person name="Allen J.E."/>
            <person name="Ambesi-Impiombato A."/>
            <person name="Apweiler R."/>
            <person name="Aturaliya R.N."/>
            <person name="Bailey T.L."/>
            <person name="Bansal M."/>
            <person name="Baxter L."/>
            <person name="Beisel K.W."/>
            <person name="Bersano T."/>
            <person name="Bono H."/>
            <person name="Chalk A.M."/>
            <person name="Chiu K.P."/>
            <person name="Choudhary V."/>
            <person name="Christoffels A."/>
            <person name="Clutterbuck D.R."/>
            <person name="Crowe M.L."/>
            <person name="Dalla E."/>
            <person name="Dalrymple B.P."/>
            <person name="de Bono B."/>
            <person name="Della Gatta G."/>
            <person name="di Bernardo D."/>
            <person name="Down T."/>
            <person name="Engstrom P."/>
            <person name="Fagiolini M."/>
            <person name="Faulkner G."/>
            <person name="Fletcher C.F."/>
            <person name="Fukushima T."/>
            <person name="Furuno M."/>
            <person name="Futaki S."/>
            <person name="Gariboldi M."/>
            <person name="Georgii-Hemming P."/>
            <person name="Gingeras T.R."/>
            <person name="Gojobori T."/>
            <person name="Green R.E."/>
            <person name="Gustincich S."/>
            <person name="Harbers M."/>
            <person name="Hayashi Y."/>
            <person name="Hensch T.K."/>
            <person name="Hirokawa N."/>
            <person name="Hill D."/>
            <person name="Huminiecki L."/>
            <person name="Iacono M."/>
            <person name="Ikeo K."/>
            <person name="Iwama A."/>
            <person name="Ishikawa T."/>
            <person name="Jakt M."/>
            <person name="Kanapin A."/>
            <person name="Katoh M."/>
            <person name="Kawasawa Y."/>
            <person name="Kelso J."/>
            <person name="Kitamura H."/>
            <person name="Kitano H."/>
            <person name="Kollias G."/>
            <person name="Krishnan S.P."/>
            <person name="Kruger A."/>
            <person name="Kummerfeld S.K."/>
            <person name="Kurochkin I.V."/>
            <person name="Lareau L.F."/>
            <person name="Lazarevic D."/>
            <person name="Lipovich L."/>
            <person name="Liu J."/>
            <person name="Liuni S."/>
            <person name="McWilliam S."/>
            <person name="Madan Babu M."/>
            <person name="Madera M."/>
            <person name="Marchionni L."/>
            <person name="Matsuda H."/>
            <person name="Matsuzawa S."/>
            <person name="Miki H."/>
            <person name="Mignone F."/>
            <person name="Miyake S."/>
            <person name="Morris K."/>
            <person name="Mottagui-Tabar S."/>
            <person name="Mulder N."/>
            <person name="Nakano N."/>
            <person name="Nakauchi H."/>
            <person name="Ng P."/>
            <person name="Nilsson R."/>
            <person name="Nishiguchi S."/>
            <person name="Nishikawa S."/>
            <person name="Nori F."/>
            <person name="Ohara O."/>
            <person name="Okazaki Y."/>
            <person name="Orlando V."/>
            <person name="Pang K.C."/>
            <person name="Pavan W.J."/>
            <person name="Pavesi G."/>
            <person name="Pesole G."/>
            <person name="Petrovsky N."/>
            <person name="Piazza S."/>
            <person name="Reed J."/>
            <person name="Reid J.F."/>
            <person name="Ring B.Z."/>
            <person name="Ringwald M."/>
            <person name="Rost B."/>
            <person name="Ruan Y."/>
            <person name="Salzberg S.L."/>
            <person name="Sandelin A."/>
            <person name="Schneider C."/>
            <person name="Schoenbach C."/>
            <person name="Sekiguchi K."/>
            <person name="Semple C.A."/>
            <person name="Seno S."/>
            <person name="Sessa L."/>
            <person name="Sheng Y."/>
            <person name="Shibata Y."/>
            <person name="Shimada H."/>
            <person name="Shimada K."/>
            <person name="Silva D."/>
            <person name="Sinclair B."/>
            <person name="Sperling S."/>
            <person name="Stupka E."/>
            <person name="Sugiura K."/>
            <person name="Sultana R."/>
            <person name="Takenaka Y."/>
            <person name="Taki K."/>
            <person name="Tammoja K."/>
            <person name="Tan S.L."/>
            <person name="Tang S."/>
            <person name="Taylor M.S."/>
            <person name="Tegner J."/>
            <person name="Teichmann S.A."/>
            <person name="Ueda H.R."/>
            <person name="van Nimwegen E."/>
            <person name="Verardo R."/>
            <person name="Wei C.L."/>
            <person name="Yagi K."/>
            <person name="Yamanishi H."/>
            <person name="Zabarovsky E."/>
            <person name="Zhu S."/>
            <person name="Zimmer A."/>
            <person name="Hide W."/>
            <person name="Bult C."/>
            <person name="Grimmond S.M."/>
            <person name="Teasdale R.D."/>
            <person name="Liu E.T."/>
            <person name="Brusic V."/>
            <person name="Quackenbush J."/>
            <person name="Wahlestedt C."/>
            <person name="Mattick J.S."/>
            <person name="Hume D.A."/>
            <person name="Kai C."/>
            <person name="Sasaki D."/>
            <person name="Tomaru Y."/>
            <person name="Fukuda S."/>
            <person name="Kanamori-Katayama M."/>
            <person name="Suzuki M."/>
            <person name="Aoki J."/>
            <person name="Arakawa T."/>
            <person name="Iida J."/>
            <person name="Imamura K."/>
            <person name="Itoh M."/>
            <person name="Kato T."/>
            <person name="Kawaji H."/>
            <person name="Kawagashira N."/>
            <person name="Kawashima T."/>
            <person name="Kojima M."/>
            <person name="Kondo S."/>
            <person name="Konno H."/>
            <person name="Nakano K."/>
            <person name="Ninomiya N."/>
            <person name="Nishio T."/>
            <person name="Okada M."/>
            <person name="Plessy C."/>
            <person name="Shibata K."/>
            <person name="Shiraki T."/>
            <person name="Suzuki S."/>
            <person name="Tagami M."/>
            <person name="Waki K."/>
            <person name="Watahiki A."/>
            <person name="Okamura-Oho Y."/>
            <person name="Suzuki H."/>
            <person name="Kawai J."/>
            <person name="Hayashizaki Y."/>
        </authorList>
    </citation>
    <scope>NUCLEOTIDE SEQUENCE [LARGE SCALE MRNA]</scope>
    <source>
        <strain>C57BL/6J</strain>
        <strain>NOD</strain>
        <tissue>Ovary</tissue>
        <tissue>Thymus</tissue>
    </source>
</reference>
<reference key="4">
    <citation type="journal article" date="2004" name="Genome Res.">
        <title>The status, quality, and expansion of the NIH full-length cDNA project: the Mammalian Gene Collection (MGC).</title>
        <authorList>
            <consortium name="The MGC Project Team"/>
        </authorList>
    </citation>
    <scope>NUCLEOTIDE SEQUENCE [LARGE SCALE MRNA]</scope>
    <source>
        <strain>C57BL/6J</strain>
        <strain>Czech II</strain>
        <tissue>Brain</tissue>
        <tissue>Mammary tumor</tissue>
    </source>
</reference>
<reference key="5">
    <citation type="journal article" date="2001" name="Biochemistry">
        <title>Substrate specificity of the heparan sulfate hexuronic acid 2-O-sulfotransferase.</title>
        <authorList>
            <person name="Rong J."/>
            <person name="Habuchi H."/>
            <person name="Kimata K."/>
            <person name="Lindahl U."/>
            <person name="Kusche-Gullberg M."/>
        </authorList>
    </citation>
    <scope>FUNCTION</scope>
    <scope>CATALYTIC ACTIVITY</scope>
    <scope>BIOPHYSICOCHEMICAL PROPERTIES</scope>
    <scope>TISSUE SPECIFICITY</scope>
</reference>
<reference key="6">
    <citation type="journal article" date="2001" name="J. Biol. Chem.">
        <title>The molecular phenotype of heparan sulfate in the Hs2st-/- mutant mouse.</title>
        <authorList>
            <person name="Merry C.L.R."/>
            <person name="Bullock S.L."/>
            <person name="Swan D.C."/>
            <person name="Backen A.C."/>
            <person name="Lyon M."/>
            <person name="Beddington R.S.P."/>
            <person name="Wilson V.A."/>
            <person name="Gallagher J.T."/>
        </authorList>
    </citation>
    <scope>FUNCTION</scope>
    <scope>CATALYTIC ACTIVITY</scope>
</reference>
<reference key="7">
    <citation type="journal article" date="2001" name="Proc. Natl. Acad. Sci. U.S.A.">
        <title>Enzyme interactions in heparan sulfate biosynthesis: uronosyl 5-epimerase and 2-O-sulfotransferase interact in vivo.</title>
        <authorList>
            <person name="Pinhal M.A.S."/>
            <person name="Smith B."/>
            <person name="Olson S."/>
            <person name="Aikawa J."/>
            <person name="Kimata K."/>
            <person name="Esko J.D."/>
        </authorList>
    </citation>
    <scope>SUBCELLULAR LOCATION</scope>
    <scope>INTERACTION WITH GLCE</scope>
</reference>
<reference key="8">
    <citation type="journal article" date="2010" name="Cell">
        <title>A tissue-specific atlas of mouse protein phosphorylation and expression.</title>
        <authorList>
            <person name="Huttlin E.L."/>
            <person name="Jedrychowski M.P."/>
            <person name="Elias J.E."/>
            <person name="Goswami T."/>
            <person name="Rad R."/>
            <person name="Beausoleil S.A."/>
            <person name="Villen J."/>
            <person name="Haas W."/>
            <person name="Sowa M.E."/>
            <person name="Gygi S.P."/>
        </authorList>
    </citation>
    <scope>IDENTIFICATION BY MASS SPECTROMETRY [LARGE SCALE ANALYSIS]</scope>
    <source>
        <tissue>Lung</tissue>
    </source>
</reference>
<protein>
    <recommendedName>
        <fullName evidence="13">Heparan sulfate 2-O-sulfotransferase 1</fullName>
        <ecNumber evidence="5">2.8.2.-</ecNumber>
    </recommendedName>
    <alternativeName>
        <fullName evidence="10">2-O-sulfotransferase</fullName>
        <shortName evidence="10">2-OST</shortName>
        <shortName evidence="3">2OST</shortName>
    </alternativeName>
    <alternativeName>
        <fullName evidence="11">HS 2-O-sulfotransferase</fullName>
    </alternativeName>
    <alternativeName>
        <fullName evidence="12">Heparan sulfate 2-sulfotransferase</fullName>
    </alternativeName>
</protein>
<accession>Q8R3H7</accession>
<accession>O88464</accession>
<accession>Q3TNP7</accession>
<accession>Q9JLK2</accession>
<organism evidence="15">
    <name type="scientific">Mus musculus</name>
    <name type="common">Mouse</name>
    <dbReference type="NCBI Taxonomy" id="10090"/>
    <lineage>
        <taxon>Eukaryota</taxon>
        <taxon>Metazoa</taxon>
        <taxon>Chordata</taxon>
        <taxon>Craniata</taxon>
        <taxon>Vertebrata</taxon>
        <taxon>Euteleostomi</taxon>
        <taxon>Mammalia</taxon>
        <taxon>Eutheria</taxon>
        <taxon>Euarchontoglires</taxon>
        <taxon>Glires</taxon>
        <taxon>Rodentia</taxon>
        <taxon>Myomorpha</taxon>
        <taxon>Muroidea</taxon>
        <taxon>Muridae</taxon>
        <taxon>Murinae</taxon>
        <taxon>Mus</taxon>
        <taxon>Mus</taxon>
    </lineage>
</organism>
<sequence>MGLLRIMMPPKLQLLAVVAFAVAMLFLENQIQKLEESRAKLERAIARHEVREIEQRHTMDGPRQDATLDEEEDIIIIYNRVPKTASTSFTNIAYDLCAKNRYHVLHINTTKNNPVMSLQDQVRFVKNITTWNEMKPGFYHGHISYLDFAKFGVKKKPIYINVIRDPIERLVSYYYFLRFGDDYRPGLRRRKQGDKKTFDECVAEGGSDCAPEKLWLQIPFFCGHSSECWNVGSRWAMDQAKSNLINEYFLVGVTEELEDFIMLLEAALPRFFRGATDLYRTGKKSHLRKTTEKKLPTKQTIAKLQQSDIWKMENEFYEFALEQFQFIRAHAVREKDGDLYILAQNFFYEKIYPKSN</sequence>